<organism>
    <name type="scientific">Synechococcus sp. (strain CC9605)</name>
    <dbReference type="NCBI Taxonomy" id="110662"/>
    <lineage>
        <taxon>Bacteria</taxon>
        <taxon>Bacillati</taxon>
        <taxon>Cyanobacteriota</taxon>
        <taxon>Cyanophyceae</taxon>
        <taxon>Synechococcales</taxon>
        <taxon>Synechococcaceae</taxon>
        <taxon>Synechococcus</taxon>
    </lineage>
</organism>
<evidence type="ECO:0000255" key="1">
    <source>
        <dbReference type="HAMAP-Rule" id="MF_00439"/>
    </source>
</evidence>
<proteinExistence type="inferred from homology"/>
<accession>Q3AH18</accession>
<reference key="1">
    <citation type="submission" date="2005-07" db="EMBL/GenBank/DDBJ databases">
        <title>Complete sequence of Synechococcus sp. CC9605.</title>
        <authorList>
            <consortium name="US DOE Joint Genome Institute"/>
            <person name="Copeland A."/>
            <person name="Lucas S."/>
            <person name="Lapidus A."/>
            <person name="Barry K."/>
            <person name="Detter J.C."/>
            <person name="Glavina T."/>
            <person name="Hammon N."/>
            <person name="Israni S."/>
            <person name="Pitluck S."/>
            <person name="Schmutz J."/>
            <person name="Martinez M."/>
            <person name="Larimer F."/>
            <person name="Land M."/>
            <person name="Kyrpides N."/>
            <person name="Ivanova N."/>
            <person name="Richardson P."/>
        </authorList>
    </citation>
    <scope>NUCLEOTIDE SEQUENCE [LARGE SCALE GENOMIC DNA]</scope>
    <source>
        <strain>CC9605</strain>
    </source>
</reference>
<protein>
    <recommendedName>
        <fullName evidence="1">Photosystem I assembly protein Ycf3</fullName>
    </recommendedName>
</protein>
<keyword id="KW-0472">Membrane</keyword>
<keyword id="KW-0602">Photosynthesis</keyword>
<keyword id="KW-0677">Repeat</keyword>
<keyword id="KW-0793">Thylakoid</keyword>
<keyword id="KW-0802">TPR repeat</keyword>
<name>YCF3_SYNSC</name>
<gene>
    <name evidence="1" type="primary">ycf3</name>
    <name type="ordered locus">Syncc9605_2382</name>
</gene>
<sequence length="173" mass="19899">MPRSNRNDNFIDKSFTVMADLIVKLLPINARSKEAYVYYRDGLSAQNDGDYAEALENYEEALKLEENSTDRSETLKNMAIIYMSNGEEERAIETYRKALEENPNQPSCLKNMGLIYEKWGRIAEEGGEQDSADRWFDQAADVWTQAVRLNPGGYLDIENWLKSTGRSNVDVYF</sequence>
<comment type="function">
    <text evidence="1">Essential for the assembly of the photosystem I (PSI) complex. May act as a chaperone-like factor to guide the assembly of the PSI subunits.</text>
</comment>
<comment type="subcellular location">
    <subcellularLocation>
        <location evidence="1">Cellular thylakoid membrane</location>
        <topology evidence="1">Peripheral membrane protein</topology>
    </subcellularLocation>
</comment>
<comment type="similarity">
    <text evidence="1">Belongs to the Ycf3 family.</text>
</comment>
<dbReference type="EMBL" id="CP000110">
    <property type="protein sequence ID" value="ABB36114.1"/>
    <property type="molecule type" value="Genomic_DNA"/>
</dbReference>
<dbReference type="RefSeq" id="WP_011365311.1">
    <property type="nucleotide sequence ID" value="NC_007516.1"/>
</dbReference>
<dbReference type="SMR" id="Q3AH18"/>
<dbReference type="STRING" id="110662.Syncc9605_2382"/>
<dbReference type="KEGG" id="syd:Syncc9605_2382"/>
<dbReference type="eggNOG" id="COG3063">
    <property type="taxonomic scope" value="Bacteria"/>
</dbReference>
<dbReference type="HOGENOM" id="CLU_141248_0_0_3"/>
<dbReference type="OrthoDB" id="9429505at2"/>
<dbReference type="GO" id="GO:0031676">
    <property type="term" value="C:plasma membrane-derived thylakoid membrane"/>
    <property type="evidence" value="ECO:0007669"/>
    <property type="project" value="UniProtKB-SubCell"/>
</dbReference>
<dbReference type="GO" id="GO:0015979">
    <property type="term" value="P:photosynthesis"/>
    <property type="evidence" value="ECO:0007669"/>
    <property type="project" value="UniProtKB-UniRule"/>
</dbReference>
<dbReference type="Gene3D" id="1.25.40.10">
    <property type="entry name" value="Tetratricopeptide repeat domain"/>
    <property type="match status" value="1"/>
</dbReference>
<dbReference type="HAMAP" id="MF_00439">
    <property type="entry name" value="Ycf3"/>
    <property type="match status" value="1"/>
</dbReference>
<dbReference type="InterPro" id="IPR022818">
    <property type="entry name" value="PSI_Ycf3_assembly"/>
</dbReference>
<dbReference type="InterPro" id="IPR011990">
    <property type="entry name" value="TPR-like_helical_dom_sf"/>
</dbReference>
<dbReference type="InterPro" id="IPR019734">
    <property type="entry name" value="TPR_rpt"/>
</dbReference>
<dbReference type="InterPro" id="IPR051685">
    <property type="entry name" value="Ycf3/AcsC/BcsC/TPR_MFPF"/>
</dbReference>
<dbReference type="NCBIfam" id="NF002725">
    <property type="entry name" value="PRK02603.1"/>
    <property type="match status" value="1"/>
</dbReference>
<dbReference type="PANTHER" id="PTHR44943">
    <property type="entry name" value="CELLULOSE SYNTHASE OPERON PROTEIN C"/>
    <property type="match status" value="1"/>
</dbReference>
<dbReference type="PANTHER" id="PTHR44943:SF8">
    <property type="entry name" value="TPR REPEAT-CONTAINING PROTEIN MJ0263"/>
    <property type="match status" value="1"/>
</dbReference>
<dbReference type="Pfam" id="PF13424">
    <property type="entry name" value="TPR_12"/>
    <property type="match status" value="1"/>
</dbReference>
<dbReference type="SMART" id="SM00028">
    <property type="entry name" value="TPR"/>
    <property type="match status" value="3"/>
</dbReference>
<dbReference type="SUPFAM" id="SSF48452">
    <property type="entry name" value="TPR-like"/>
    <property type="match status" value="1"/>
</dbReference>
<dbReference type="PROSITE" id="PS50005">
    <property type="entry name" value="TPR"/>
    <property type="match status" value="2"/>
</dbReference>
<dbReference type="PROSITE" id="PS50293">
    <property type="entry name" value="TPR_REGION"/>
    <property type="match status" value="1"/>
</dbReference>
<feature type="chain" id="PRO_1000025975" description="Photosystem I assembly protein Ycf3">
    <location>
        <begin position="1"/>
        <end position="173"/>
    </location>
</feature>
<feature type="repeat" description="TPR 1">
    <location>
        <begin position="35"/>
        <end position="68"/>
    </location>
</feature>
<feature type="repeat" description="TPR 2">
    <location>
        <begin position="72"/>
        <end position="105"/>
    </location>
</feature>
<feature type="repeat" description="TPR 3">
    <location>
        <begin position="120"/>
        <end position="153"/>
    </location>
</feature>